<keyword id="KW-0479">Metal-binding</keyword>
<keyword id="KW-0862">Zinc</keyword>
<proteinExistence type="inferred from homology"/>
<gene>
    <name evidence="1" type="primary">yacG</name>
    <name type="ordered locus">ECH74115_0108</name>
</gene>
<dbReference type="EMBL" id="CP001164">
    <property type="protein sequence ID" value="ACI39110.1"/>
    <property type="molecule type" value="Genomic_DNA"/>
</dbReference>
<dbReference type="RefSeq" id="WP_000005042.1">
    <property type="nucleotide sequence ID" value="NC_011353.1"/>
</dbReference>
<dbReference type="SMR" id="B5YZD6"/>
<dbReference type="GeneID" id="93777334"/>
<dbReference type="KEGG" id="ecf:ECH74115_0108"/>
<dbReference type="HOGENOM" id="CLU_178280_3_1_6"/>
<dbReference type="GO" id="GO:0008657">
    <property type="term" value="F:DNA topoisomerase type II (double strand cut, ATP-hydrolyzing) inhibitor activity"/>
    <property type="evidence" value="ECO:0007669"/>
    <property type="project" value="UniProtKB-UniRule"/>
</dbReference>
<dbReference type="GO" id="GO:0008270">
    <property type="term" value="F:zinc ion binding"/>
    <property type="evidence" value="ECO:0007669"/>
    <property type="project" value="UniProtKB-UniRule"/>
</dbReference>
<dbReference type="GO" id="GO:0006355">
    <property type="term" value="P:regulation of DNA-templated transcription"/>
    <property type="evidence" value="ECO:0007669"/>
    <property type="project" value="InterPro"/>
</dbReference>
<dbReference type="FunFam" id="3.30.50.10:FF:000026">
    <property type="entry name" value="DNA gyrase inhibitor YacG"/>
    <property type="match status" value="1"/>
</dbReference>
<dbReference type="Gene3D" id="3.30.50.10">
    <property type="entry name" value="Erythroid Transcription Factor GATA-1, subunit A"/>
    <property type="match status" value="1"/>
</dbReference>
<dbReference type="HAMAP" id="MF_00649">
    <property type="entry name" value="DNA_gyrase_inhibitor_YacG"/>
    <property type="match status" value="1"/>
</dbReference>
<dbReference type="InterPro" id="IPR005584">
    <property type="entry name" value="DNA_gyrase_inhibitor_YacG"/>
</dbReference>
<dbReference type="InterPro" id="IPR013088">
    <property type="entry name" value="Znf_NHR/GATA"/>
</dbReference>
<dbReference type="NCBIfam" id="NF001638">
    <property type="entry name" value="PRK00418.1"/>
    <property type="match status" value="1"/>
</dbReference>
<dbReference type="PANTHER" id="PTHR36150">
    <property type="entry name" value="DNA GYRASE INHIBITOR YACG"/>
    <property type="match status" value="1"/>
</dbReference>
<dbReference type="PANTHER" id="PTHR36150:SF1">
    <property type="entry name" value="DNA GYRASE INHIBITOR YACG"/>
    <property type="match status" value="1"/>
</dbReference>
<dbReference type="Pfam" id="PF03884">
    <property type="entry name" value="YacG"/>
    <property type="match status" value="1"/>
</dbReference>
<dbReference type="SUPFAM" id="SSF57716">
    <property type="entry name" value="Glucocorticoid receptor-like (DNA-binding domain)"/>
    <property type="match status" value="1"/>
</dbReference>
<comment type="function">
    <text evidence="1">Inhibits all the catalytic activities of DNA gyrase by preventing its interaction with DNA. Acts by binding directly to the C-terminal domain of GyrB, which probably disrupts DNA binding by the gyrase.</text>
</comment>
<comment type="cofactor">
    <cofactor evidence="1">
        <name>Zn(2+)</name>
        <dbReference type="ChEBI" id="CHEBI:29105"/>
    </cofactor>
    <text evidence="1">Binds 1 zinc ion.</text>
</comment>
<comment type="subunit">
    <text evidence="1">Interacts with GyrB.</text>
</comment>
<comment type="similarity">
    <text evidence="1">Belongs to the DNA gyrase inhibitor YacG family.</text>
</comment>
<reference key="1">
    <citation type="journal article" date="2011" name="Proc. Natl. Acad. Sci. U.S.A.">
        <title>Genomic anatomy of Escherichia coli O157:H7 outbreaks.</title>
        <authorList>
            <person name="Eppinger M."/>
            <person name="Mammel M.K."/>
            <person name="Leclerc J.E."/>
            <person name="Ravel J."/>
            <person name="Cebula T.A."/>
        </authorList>
    </citation>
    <scope>NUCLEOTIDE SEQUENCE [LARGE SCALE GENOMIC DNA]</scope>
    <source>
        <strain>EC4115 / EHEC</strain>
    </source>
</reference>
<accession>B5YZD6</accession>
<name>YACG_ECO5E</name>
<sequence length="65" mass="7306">MSETITVNCPTCGKTVVWGEISPFRPFCSKRCQLIDLGEWAAEEKRIPSSGDLSESDDWSEEPKQ</sequence>
<evidence type="ECO:0000255" key="1">
    <source>
        <dbReference type="HAMAP-Rule" id="MF_00649"/>
    </source>
</evidence>
<evidence type="ECO:0000256" key="2">
    <source>
        <dbReference type="SAM" id="MobiDB-lite"/>
    </source>
</evidence>
<organism>
    <name type="scientific">Escherichia coli O157:H7 (strain EC4115 / EHEC)</name>
    <dbReference type="NCBI Taxonomy" id="444450"/>
    <lineage>
        <taxon>Bacteria</taxon>
        <taxon>Pseudomonadati</taxon>
        <taxon>Pseudomonadota</taxon>
        <taxon>Gammaproteobacteria</taxon>
        <taxon>Enterobacterales</taxon>
        <taxon>Enterobacteriaceae</taxon>
        <taxon>Escherichia</taxon>
    </lineage>
</organism>
<feature type="chain" id="PRO_1000130959" description="DNA gyrase inhibitor YacG">
    <location>
        <begin position="1"/>
        <end position="65"/>
    </location>
</feature>
<feature type="region of interest" description="Disordered" evidence="2">
    <location>
        <begin position="45"/>
        <end position="65"/>
    </location>
</feature>
<feature type="compositionally biased region" description="Acidic residues" evidence="2">
    <location>
        <begin position="54"/>
        <end position="65"/>
    </location>
</feature>
<feature type="binding site" evidence="1">
    <location>
        <position position="9"/>
    </location>
    <ligand>
        <name>Zn(2+)</name>
        <dbReference type="ChEBI" id="CHEBI:29105"/>
    </ligand>
</feature>
<feature type="binding site" evidence="1">
    <location>
        <position position="12"/>
    </location>
    <ligand>
        <name>Zn(2+)</name>
        <dbReference type="ChEBI" id="CHEBI:29105"/>
    </ligand>
</feature>
<feature type="binding site" evidence="1">
    <location>
        <position position="28"/>
    </location>
    <ligand>
        <name>Zn(2+)</name>
        <dbReference type="ChEBI" id="CHEBI:29105"/>
    </ligand>
</feature>
<feature type="binding site" evidence="1">
    <location>
        <position position="32"/>
    </location>
    <ligand>
        <name>Zn(2+)</name>
        <dbReference type="ChEBI" id="CHEBI:29105"/>
    </ligand>
</feature>
<protein>
    <recommendedName>
        <fullName evidence="1">DNA gyrase inhibitor YacG</fullName>
    </recommendedName>
</protein>